<accession>P0CO51</accession>
<accession>Q55MT9</accession>
<accession>Q5KB66</accession>
<name>KU70_CRYNB</name>
<gene>
    <name type="primary">KU70</name>
    <name type="ordered locus">CNBH3450</name>
</gene>
<keyword id="KW-0067">ATP-binding</keyword>
<keyword id="KW-0158">Chromosome</keyword>
<keyword id="KW-0227">DNA damage</keyword>
<keyword id="KW-0233">DNA recombination</keyword>
<keyword id="KW-0234">DNA repair</keyword>
<keyword id="KW-0238">DNA-binding</keyword>
<keyword id="KW-0347">Helicase</keyword>
<keyword id="KW-0378">Hydrolase</keyword>
<keyword id="KW-0547">Nucleotide-binding</keyword>
<keyword id="KW-0539">Nucleus</keyword>
<keyword id="KW-0779">Telomere</keyword>
<sequence>MSSYYNKGDAPSWEALDQDGLDDVIDTSEPSAVAEDPGNYQPGNYVFQTLRTINAEEMKRLVKLMQTAKEQYEAQDDDETVETTEPEILRKTFPPIEESHEMNIANVIQTCNFLFRDGGTQLRGNKRVFWITDNDMPPGMNNRQPARTSYGDLTTYGVTAETFFIDRPDHRFNPNIFWNDILDREAIDYNDDQPDPEGLSSLADLMKDLVIKTSPKRTHFHVPLKLGKDGEIVIGVSGCSMVSEQGKGASRYVKMRGQVVEEVQSKTEYTSAKSLNSGQWGSNPIKVLGFQAASQLRFQDNLKHPFFIYPNEEEYTGSTRTFAALLNSCLKYNRHALALCRLRSNHVPEFCVLIPQEEKTSSNGQEYPPGFHLIILPYKDSIRPPPKKVAEFLQSPPIATDEQINAMKAVIKRTRFKAAAYRPEIYPNPSLAYHYDQLQALAFEEDWDPEDPAKQALDKTMPLYGGMHSRAGEFMEEFNKEIENDERAVEKLAAPTKRGKAEKETTVNEWDLRNIPDMWKKGTLSQLSILARLRLRRRPFTGQNQKGGYHRRRIRTSFHK</sequence>
<reference key="1">
    <citation type="journal article" date="2005" name="Science">
        <title>The genome of the basidiomycetous yeast and human pathogen Cryptococcus neoformans.</title>
        <authorList>
            <person name="Loftus B.J."/>
            <person name="Fung E."/>
            <person name="Roncaglia P."/>
            <person name="Rowley D."/>
            <person name="Amedeo P."/>
            <person name="Bruno D."/>
            <person name="Vamathevan J."/>
            <person name="Miranda M."/>
            <person name="Anderson I.J."/>
            <person name="Fraser J.A."/>
            <person name="Allen J.E."/>
            <person name="Bosdet I.E."/>
            <person name="Brent M.R."/>
            <person name="Chiu R."/>
            <person name="Doering T.L."/>
            <person name="Donlin M.J."/>
            <person name="D'Souza C.A."/>
            <person name="Fox D.S."/>
            <person name="Grinberg V."/>
            <person name="Fu J."/>
            <person name="Fukushima M."/>
            <person name="Haas B.J."/>
            <person name="Huang J.C."/>
            <person name="Janbon G."/>
            <person name="Jones S.J.M."/>
            <person name="Koo H.L."/>
            <person name="Krzywinski M.I."/>
            <person name="Kwon-Chung K.J."/>
            <person name="Lengeler K.B."/>
            <person name="Maiti R."/>
            <person name="Marra M.A."/>
            <person name="Marra R.E."/>
            <person name="Mathewson C.A."/>
            <person name="Mitchell T.G."/>
            <person name="Pertea M."/>
            <person name="Riggs F.R."/>
            <person name="Salzberg S.L."/>
            <person name="Schein J.E."/>
            <person name="Shvartsbeyn A."/>
            <person name="Shin H."/>
            <person name="Shumway M."/>
            <person name="Specht C.A."/>
            <person name="Suh B.B."/>
            <person name="Tenney A."/>
            <person name="Utterback T.R."/>
            <person name="Wickes B.L."/>
            <person name="Wortman J.R."/>
            <person name="Wye N.H."/>
            <person name="Kronstad J.W."/>
            <person name="Lodge J.K."/>
            <person name="Heitman J."/>
            <person name="Davis R.W."/>
            <person name="Fraser C.M."/>
            <person name="Hyman R.W."/>
        </authorList>
    </citation>
    <scope>NUCLEOTIDE SEQUENCE [LARGE SCALE GENOMIC DNA]</scope>
    <source>
        <strain>B-3501A</strain>
    </source>
</reference>
<protein>
    <recommendedName>
        <fullName>ATP-dependent DNA helicase II subunit 1</fullName>
        <ecNumber>3.6.4.12</ecNumber>
    </recommendedName>
    <alternativeName>
        <fullName>ATP-dependent DNA helicase II subunit Ku70</fullName>
    </alternativeName>
</protein>
<proteinExistence type="inferred from homology"/>
<dbReference type="EC" id="3.6.4.12"/>
<dbReference type="EMBL" id="AAEY01000042">
    <property type="protein sequence ID" value="EAL19246.1"/>
    <property type="status" value="ALT_SEQ"/>
    <property type="molecule type" value="Genomic_DNA"/>
</dbReference>
<dbReference type="RefSeq" id="XP_773893.1">
    <property type="nucleotide sequence ID" value="XM_768800.1"/>
</dbReference>
<dbReference type="SMR" id="P0CO51"/>
<dbReference type="GeneID" id="4937872"/>
<dbReference type="KEGG" id="cnb:CNBH3450"/>
<dbReference type="HOGENOM" id="CLU_014815_3_0_1"/>
<dbReference type="OrthoDB" id="5126at5206"/>
<dbReference type="GO" id="GO:0000781">
    <property type="term" value="C:chromosome, telomeric region"/>
    <property type="evidence" value="ECO:0007669"/>
    <property type="project" value="UniProtKB-SubCell"/>
</dbReference>
<dbReference type="GO" id="GO:0043564">
    <property type="term" value="C:Ku70:Ku80 complex"/>
    <property type="evidence" value="ECO:0007669"/>
    <property type="project" value="InterPro"/>
</dbReference>
<dbReference type="GO" id="GO:0005524">
    <property type="term" value="F:ATP binding"/>
    <property type="evidence" value="ECO:0007669"/>
    <property type="project" value="UniProtKB-KW"/>
</dbReference>
<dbReference type="GO" id="GO:0016887">
    <property type="term" value="F:ATP hydrolysis activity"/>
    <property type="evidence" value="ECO:0007669"/>
    <property type="project" value="RHEA"/>
</dbReference>
<dbReference type="GO" id="GO:0003684">
    <property type="term" value="F:damaged DNA binding"/>
    <property type="evidence" value="ECO:0007669"/>
    <property type="project" value="InterPro"/>
</dbReference>
<dbReference type="GO" id="GO:0003678">
    <property type="term" value="F:DNA helicase activity"/>
    <property type="evidence" value="ECO:0007669"/>
    <property type="project" value="InterPro"/>
</dbReference>
<dbReference type="GO" id="GO:0003690">
    <property type="term" value="F:double-stranded DNA binding"/>
    <property type="evidence" value="ECO:0007669"/>
    <property type="project" value="TreeGrafter"/>
</dbReference>
<dbReference type="GO" id="GO:0042162">
    <property type="term" value="F:telomeric DNA binding"/>
    <property type="evidence" value="ECO:0007669"/>
    <property type="project" value="InterPro"/>
</dbReference>
<dbReference type="GO" id="GO:0006310">
    <property type="term" value="P:DNA recombination"/>
    <property type="evidence" value="ECO:0007669"/>
    <property type="project" value="UniProtKB-KW"/>
</dbReference>
<dbReference type="GO" id="GO:0006303">
    <property type="term" value="P:double-strand break repair via nonhomologous end joining"/>
    <property type="evidence" value="ECO:0007669"/>
    <property type="project" value="InterPro"/>
</dbReference>
<dbReference type="GO" id="GO:0000723">
    <property type="term" value="P:telomere maintenance"/>
    <property type="evidence" value="ECO:0007669"/>
    <property type="project" value="InterPro"/>
</dbReference>
<dbReference type="CDD" id="cd00788">
    <property type="entry name" value="KU70"/>
    <property type="match status" value="1"/>
</dbReference>
<dbReference type="Gene3D" id="1.10.1600.10">
    <property type="match status" value="1"/>
</dbReference>
<dbReference type="Gene3D" id="2.40.290.10">
    <property type="match status" value="1"/>
</dbReference>
<dbReference type="Gene3D" id="3.40.50.410">
    <property type="entry name" value="von Willebrand factor, type A domain"/>
    <property type="match status" value="1"/>
</dbReference>
<dbReference type="InterPro" id="IPR006165">
    <property type="entry name" value="Ku70"/>
</dbReference>
<dbReference type="InterPro" id="IPR006164">
    <property type="entry name" value="Ku70/Ku80_beta-barrel_dom"/>
</dbReference>
<dbReference type="InterPro" id="IPR047087">
    <property type="entry name" value="KU70_core_dom"/>
</dbReference>
<dbReference type="InterPro" id="IPR005160">
    <property type="entry name" value="Ku_C"/>
</dbReference>
<dbReference type="InterPro" id="IPR005161">
    <property type="entry name" value="Ku_N"/>
</dbReference>
<dbReference type="InterPro" id="IPR016194">
    <property type="entry name" value="SPOC-like_C_dom_sf"/>
</dbReference>
<dbReference type="InterPro" id="IPR036465">
    <property type="entry name" value="vWFA_dom_sf"/>
</dbReference>
<dbReference type="PANTHER" id="PTHR12604">
    <property type="entry name" value="KU AUTOANTIGEN DNA HELICASE"/>
    <property type="match status" value="1"/>
</dbReference>
<dbReference type="PANTHER" id="PTHR12604:SF2">
    <property type="entry name" value="X-RAY REPAIR CROSS-COMPLEMENTING PROTEIN 6"/>
    <property type="match status" value="1"/>
</dbReference>
<dbReference type="Pfam" id="PF02735">
    <property type="entry name" value="Ku"/>
    <property type="match status" value="1"/>
</dbReference>
<dbReference type="Pfam" id="PF03730">
    <property type="entry name" value="Ku_C"/>
    <property type="match status" value="1"/>
</dbReference>
<dbReference type="Pfam" id="PF03731">
    <property type="entry name" value="Ku_N"/>
    <property type="match status" value="1"/>
</dbReference>
<dbReference type="PIRSF" id="PIRSF003033">
    <property type="entry name" value="Ku70"/>
    <property type="match status" value="1"/>
</dbReference>
<dbReference type="SMART" id="SM00559">
    <property type="entry name" value="Ku78"/>
    <property type="match status" value="1"/>
</dbReference>
<dbReference type="SUPFAM" id="SSF100939">
    <property type="entry name" value="SPOC domain-like"/>
    <property type="match status" value="1"/>
</dbReference>
<dbReference type="SUPFAM" id="SSF53300">
    <property type="entry name" value="vWA-like"/>
    <property type="match status" value="1"/>
</dbReference>
<comment type="function">
    <text evidence="1">Single-stranded DNA-dependent ATP-dependent helicase. Involved in non-homologous end joining (NHEJ) DNA double strand break repair. DNA-binding is sequence-independent but has a high affinity to nicks in double-stranded DNA and to the ends of duplex DNA. Binds to naturally occurring chromosomal ends, and therefore provides chromosomal end protection. Required also for telomere recombination to repair telomeric ends in the absence of telomerase. KU70, of the KU70/KU80 heterodimer, binds to the stem loop of TLC1, the RNA component of telomerase. Involved in telomere maintenance. Interacts with telomeric repeats and subtelomeric sequences thereby controlling telomere length and protecting against subtelomeric rearrangement. Maintains telomeric chromatin, which is involved in silencing the expression of genes located at the telomere. Required for mating-type switching (By similarity).</text>
</comment>
<comment type="catalytic activity">
    <reaction>
        <text>ATP + H2O = ADP + phosphate + H(+)</text>
        <dbReference type="Rhea" id="RHEA:13065"/>
        <dbReference type="ChEBI" id="CHEBI:15377"/>
        <dbReference type="ChEBI" id="CHEBI:15378"/>
        <dbReference type="ChEBI" id="CHEBI:30616"/>
        <dbReference type="ChEBI" id="CHEBI:43474"/>
        <dbReference type="ChEBI" id="CHEBI:456216"/>
        <dbReference type="EC" id="3.6.4.12"/>
    </reaction>
</comment>
<comment type="subunit">
    <text evidence="1">Heterodimer of Ku70 and Ku80.</text>
</comment>
<comment type="subcellular location">
    <subcellularLocation>
        <location evidence="1">Nucleus</location>
    </subcellularLocation>
    <subcellularLocation>
        <location evidence="1">Chromosome</location>
        <location evidence="1">Telomere</location>
    </subcellularLocation>
</comment>
<comment type="similarity">
    <text evidence="3">Belongs to the ku70 family.</text>
</comment>
<comment type="sequence caution" evidence="3">
    <conflict type="erroneous gene model prediction">
        <sequence resource="EMBL-CDS" id="EAL19246"/>
    </conflict>
</comment>
<feature type="chain" id="PRO_0000410130" description="ATP-dependent DNA helicase II subunit 1">
    <location>
        <begin position="1"/>
        <end position="560"/>
    </location>
</feature>
<feature type="domain" description="Ku">
    <location>
        <begin position="224"/>
        <end position="413"/>
    </location>
</feature>
<feature type="region of interest" description="Disordered" evidence="2">
    <location>
        <begin position="541"/>
        <end position="560"/>
    </location>
</feature>
<feature type="compositionally biased region" description="Basic residues" evidence="2">
    <location>
        <begin position="548"/>
        <end position="560"/>
    </location>
</feature>
<organism>
    <name type="scientific">Cryptococcus neoformans var. neoformans serotype D (strain B-3501A)</name>
    <name type="common">Filobasidiella neoformans</name>
    <dbReference type="NCBI Taxonomy" id="283643"/>
    <lineage>
        <taxon>Eukaryota</taxon>
        <taxon>Fungi</taxon>
        <taxon>Dikarya</taxon>
        <taxon>Basidiomycota</taxon>
        <taxon>Agaricomycotina</taxon>
        <taxon>Tremellomycetes</taxon>
        <taxon>Tremellales</taxon>
        <taxon>Cryptococcaceae</taxon>
        <taxon>Cryptococcus</taxon>
        <taxon>Cryptococcus neoformans species complex</taxon>
    </lineage>
</organism>
<evidence type="ECO:0000250" key="1"/>
<evidence type="ECO:0000256" key="2">
    <source>
        <dbReference type="SAM" id="MobiDB-lite"/>
    </source>
</evidence>
<evidence type="ECO:0000305" key="3"/>